<reference key="1">
    <citation type="journal article" date="1993" name="Ann. Mo. Bot. Gard.">
        <title>A parsimony analysis of the Asteridae sensu lato based on rbcL sequences.</title>
        <authorList>
            <person name="Olmstead R.G."/>
            <person name="Bremer B."/>
            <person name="Scott K.M."/>
            <person name="Palmer J.D."/>
        </authorList>
        <dbReference type="AGRICOLA" id="IND93053816"/>
    </citation>
    <scope>NUCLEOTIDE SEQUENCE [GENOMIC DNA]</scope>
</reference>
<reference key="2">
    <citation type="journal article" date="2006" name="Theor. Appl. Genet.">
        <title>Complete chloroplast genome sequences of Solanum bulbocastanum, Solanum lycopersicum and comparative analyses with other Solanaceae genomes.</title>
        <authorList>
            <person name="Daniell H."/>
            <person name="Lee S.-B."/>
            <person name="Grevich J."/>
            <person name="Saski C."/>
            <person name="Quesada-Vargas T."/>
            <person name="Guda C."/>
            <person name="Tomkins J."/>
            <person name="Jansen R.K."/>
        </authorList>
    </citation>
    <scope>NUCLEOTIDE SEQUENCE [LARGE SCALE GENOMIC DNA]</scope>
    <source>
        <strain>cv. LA3023</strain>
    </source>
</reference>
<reference key="3">
    <citation type="journal article" date="2006" name="J. Mol. Evol.">
        <title>Sequence of the tomato chloroplast DNA and evolutionary comparison of solanaceous plastid genomes.</title>
        <authorList>
            <person name="Kahlau S."/>
            <person name="Aspinall S."/>
            <person name="Gray J.C."/>
            <person name="Bock R."/>
        </authorList>
    </citation>
    <scope>NUCLEOTIDE SEQUENCE [LARGE SCALE GENOMIC DNA]</scope>
    <source>
        <strain>cv. IPA-6</strain>
    </source>
</reference>
<reference key="4">
    <citation type="journal article" date="1992" name="Plant Physiol.">
        <title>Posttranslational modifications in the amino-terminal region of the large subunit of ribulose-1,5-bisphosphate carboxylase/oxygenase from several plant species.</title>
        <authorList>
            <person name="Houtz R.L."/>
            <person name="Poneleit L."/>
            <person name="Jones S.B."/>
            <person name="Royer M."/>
            <person name="Stults J.T."/>
        </authorList>
    </citation>
    <scope>PROTEIN SEQUENCE OF 3-18</scope>
    <scope>METHYLATION AT LYS-14</scope>
    <scope>ACETYLATION AT PRO-3</scope>
</reference>
<organism>
    <name type="scientific">Solanum lycopersicum</name>
    <name type="common">Tomato</name>
    <name type="synonym">Lycopersicon esculentum</name>
    <dbReference type="NCBI Taxonomy" id="4081"/>
    <lineage>
        <taxon>Eukaryota</taxon>
        <taxon>Viridiplantae</taxon>
        <taxon>Streptophyta</taxon>
        <taxon>Embryophyta</taxon>
        <taxon>Tracheophyta</taxon>
        <taxon>Spermatophyta</taxon>
        <taxon>Magnoliopsida</taxon>
        <taxon>eudicotyledons</taxon>
        <taxon>Gunneridae</taxon>
        <taxon>Pentapetalae</taxon>
        <taxon>asterids</taxon>
        <taxon>lamiids</taxon>
        <taxon>Solanales</taxon>
        <taxon>Solanaceae</taxon>
        <taxon>Solanoideae</taxon>
        <taxon>Solaneae</taxon>
        <taxon>Solanum</taxon>
        <taxon>Solanum subgen. Lycopersicon</taxon>
    </lineage>
</organism>
<feature type="propeptide" id="PRO_0000031285" evidence="2">
    <location>
        <begin position="1"/>
        <end position="2"/>
    </location>
</feature>
<feature type="chain" id="PRO_0000031286" description="Ribulose bisphosphate carboxylase large chain">
    <location>
        <begin position="3"/>
        <end position="477"/>
    </location>
</feature>
<feature type="active site" description="Proton acceptor" evidence="1">
    <location>
        <position position="175"/>
    </location>
</feature>
<feature type="active site" description="Proton acceptor" evidence="1">
    <location>
        <position position="294"/>
    </location>
</feature>
<feature type="binding site" description="in homodimeric partner" evidence="1">
    <location>
        <position position="123"/>
    </location>
    <ligand>
        <name>substrate</name>
    </ligand>
</feature>
<feature type="binding site" evidence="1">
    <location>
        <position position="173"/>
    </location>
    <ligand>
        <name>substrate</name>
    </ligand>
</feature>
<feature type="binding site" evidence="1">
    <location>
        <position position="177"/>
    </location>
    <ligand>
        <name>substrate</name>
    </ligand>
</feature>
<feature type="binding site" description="via carbamate group" evidence="1">
    <location>
        <position position="201"/>
    </location>
    <ligand>
        <name>Mg(2+)</name>
        <dbReference type="ChEBI" id="CHEBI:18420"/>
    </ligand>
</feature>
<feature type="binding site" evidence="1">
    <location>
        <position position="203"/>
    </location>
    <ligand>
        <name>Mg(2+)</name>
        <dbReference type="ChEBI" id="CHEBI:18420"/>
    </ligand>
</feature>
<feature type="binding site" evidence="1">
    <location>
        <position position="204"/>
    </location>
    <ligand>
        <name>Mg(2+)</name>
        <dbReference type="ChEBI" id="CHEBI:18420"/>
    </ligand>
</feature>
<feature type="binding site" evidence="1">
    <location>
        <position position="295"/>
    </location>
    <ligand>
        <name>substrate</name>
    </ligand>
</feature>
<feature type="binding site" evidence="1">
    <location>
        <position position="327"/>
    </location>
    <ligand>
        <name>substrate</name>
    </ligand>
</feature>
<feature type="binding site" evidence="1">
    <location>
        <position position="379"/>
    </location>
    <ligand>
        <name>substrate</name>
    </ligand>
</feature>
<feature type="site" description="Transition state stabilizer" evidence="1">
    <location>
        <position position="334"/>
    </location>
</feature>
<feature type="modified residue" description="N-acetylproline" evidence="2">
    <location>
        <position position="3"/>
    </location>
</feature>
<feature type="modified residue" description="N6,N6,N6-trimethyllysine" evidence="2">
    <location>
        <position position="14"/>
    </location>
</feature>
<feature type="modified residue" description="N6-carboxylysine" evidence="1">
    <location>
        <position position="201"/>
    </location>
</feature>
<feature type="disulfide bond" description="Interchain; in linked form" evidence="1">
    <location>
        <position position="247"/>
    </location>
</feature>
<accession>P27065</accession>
<accession>Q2A7G1</accession>
<accession>Q2MI92</accession>
<proteinExistence type="evidence at protein level"/>
<dbReference type="EC" id="4.1.1.39"/>
<dbReference type="EMBL" id="L14403">
    <property type="protein sequence ID" value="AAA19771.1"/>
    <property type="molecule type" value="Unassigned_DNA"/>
</dbReference>
<dbReference type="EMBL" id="DQ347959">
    <property type="protein sequence ID" value="ABC56308.1"/>
    <property type="molecule type" value="Genomic_DNA"/>
</dbReference>
<dbReference type="EMBL" id="AM087200">
    <property type="protein sequence ID" value="CAJ32401.1"/>
    <property type="molecule type" value="Genomic_DNA"/>
</dbReference>
<dbReference type="PIR" id="PQ0795">
    <property type="entry name" value="PQ0795"/>
</dbReference>
<dbReference type="RefSeq" id="AP_004936.1">
    <property type="nucleotide sequence ID" value="AC_000188.1"/>
</dbReference>
<dbReference type="RefSeq" id="YP_008563096.1">
    <property type="nucleotide sequence ID" value="NC_007898.3"/>
</dbReference>
<dbReference type="SMR" id="P27065"/>
<dbReference type="FunCoup" id="P27065">
    <property type="interactions" value="459"/>
</dbReference>
<dbReference type="STRING" id="4081.P27065"/>
<dbReference type="iPTMnet" id="P27065"/>
<dbReference type="PaxDb" id="4081-Solyc01g007330.2.1"/>
<dbReference type="GeneID" id="3950460"/>
<dbReference type="KEGG" id="sly:3950460"/>
<dbReference type="eggNOG" id="ENOG502QTI9">
    <property type="taxonomic scope" value="Eukaryota"/>
</dbReference>
<dbReference type="HOGENOM" id="CLU_031450_2_0_1"/>
<dbReference type="InParanoid" id="P27065"/>
<dbReference type="OrthoDB" id="1578724at2759"/>
<dbReference type="PhylomeDB" id="P27065"/>
<dbReference type="Proteomes" id="UP000004994">
    <property type="component" value="Chloroplast"/>
</dbReference>
<dbReference type="ExpressionAtlas" id="P27065">
    <property type="expression patterns" value="baseline"/>
</dbReference>
<dbReference type="GO" id="GO:0009507">
    <property type="term" value="C:chloroplast"/>
    <property type="evidence" value="ECO:0007669"/>
    <property type="project" value="UniProtKB-SubCell"/>
</dbReference>
<dbReference type="GO" id="GO:0000287">
    <property type="term" value="F:magnesium ion binding"/>
    <property type="evidence" value="ECO:0007669"/>
    <property type="project" value="UniProtKB-UniRule"/>
</dbReference>
<dbReference type="GO" id="GO:0004497">
    <property type="term" value="F:monooxygenase activity"/>
    <property type="evidence" value="ECO:0007669"/>
    <property type="project" value="UniProtKB-KW"/>
</dbReference>
<dbReference type="GO" id="GO:0016984">
    <property type="term" value="F:ribulose-bisphosphate carboxylase activity"/>
    <property type="evidence" value="ECO:0007669"/>
    <property type="project" value="UniProtKB-UniRule"/>
</dbReference>
<dbReference type="GO" id="GO:0009853">
    <property type="term" value="P:photorespiration"/>
    <property type="evidence" value="ECO:0007669"/>
    <property type="project" value="UniProtKB-KW"/>
</dbReference>
<dbReference type="GO" id="GO:0019253">
    <property type="term" value="P:reductive pentose-phosphate cycle"/>
    <property type="evidence" value="ECO:0007669"/>
    <property type="project" value="UniProtKB-UniRule"/>
</dbReference>
<dbReference type="CDD" id="cd08212">
    <property type="entry name" value="RuBisCO_large_I"/>
    <property type="match status" value="1"/>
</dbReference>
<dbReference type="FunFam" id="3.20.20.110:FF:000001">
    <property type="entry name" value="Ribulose bisphosphate carboxylase large chain"/>
    <property type="match status" value="1"/>
</dbReference>
<dbReference type="FunFam" id="3.30.70.150:FF:000001">
    <property type="entry name" value="Ribulose bisphosphate carboxylase large chain"/>
    <property type="match status" value="1"/>
</dbReference>
<dbReference type="Gene3D" id="3.20.20.110">
    <property type="entry name" value="Ribulose bisphosphate carboxylase, large subunit, C-terminal domain"/>
    <property type="match status" value="1"/>
</dbReference>
<dbReference type="Gene3D" id="3.30.70.150">
    <property type="entry name" value="RuBisCO large subunit, N-terminal domain"/>
    <property type="match status" value="1"/>
</dbReference>
<dbReference type="HAMAP" id="MF_01338">
    <property type="entry name" value="RuBisCO_L_type1"/>
    <property type="match status" value="1"/>
</dbReference>
<dbReference type="InterPro" id="IPR033966">
    <property type="entry name" value="RuBisCO"/>
</dbReference>
<dbReference type="InterPro" id="IPR020878">
    <property type="entry name" value="RuBisCo_large_chain_AS"/>
</dbReference>
<dbReference type="InterPro" id="IPR000685">
    <property type="entry name" value="RuBisCO_lsu_C"/>
</dbReference>
<dbReference type="InterPro" id="IPR036376">
    <property type="entry name" value="RuBisCO_lsu_C_sf"/>
</dbReference>
<dbReference type="InterPro" id="IPR017443">
    <property type="entry name" value="RuBisCO_lsu_fd_N"/>
</dbReference>
<dbReference type="InterPro" id="IPR036422">
    <property type="entry name" value="RuBisCO_lsu_N_sf"/>
</dbReference>
<dbReference type="InterPro" id="IPR020888">
    <property type="entry name" value="RuBisCO_lsuI"/>
</dbReference>
<dbReference type="NCBIfam" id="NF003252">
    <property type="entry name" value="PRK04208.1"/>
    <property type="match status" value="1"/>
</dbReference>
<dbReference type="PANTHER" id="PTHR42704">
    <property type="entry name" value="RIBULOSE BISPHOSPHATE CARBOXYLASE"/>
    <property type="match status" value="1"/>
</dbReference>
<dbReference type="PANTHER" id="PTHR42704:SF16">
    <property type="entry name" value="RIBULOSE BISPHOSPHATE CARBOXYLASE LARGE CHAIN"/>
    <property type="match status" value="1"/>
</dbReference>
<dbReference type="Pfam" id="PF00016">
    <property type="entry name" value="RuBisCO_large"/>
    <property type="match status" value="1"/>
</dbReference>
<dbReference type="Pfam" id="PF02788">
    <property type="entry name" value="RuBisCO_large_N"/>
    <property type="match status" value="1"/>
</dbReference>
<dbReference type="SFLD" id="SFLDG01052">
    <property type="entry name" value="RuBisCO"/>
    <property type="match status" value="1"/>
</dbReference>
<dbReference type="SFLD" id="SFLDS00014">
    <property type="entry name" value="RuBisCO"/>
    <property type="match status" value="1"/>
</dbReference>
<dbReference type="SFLD" id="SFLDG00301">
    <property type="entry name" value="RuBisCO-like_proteins"/>
    <property type="match status" value="1"/>
</dbReference>
<dbReference type="SUPFAM" id="SSF51649">
    <property type="entry name" value="RuBisCo, C-terminal domain"/>
    <property type="match status" value="1"/>
</dbReference>
<dbReference type="SUPFAM" id="SSF54966">
    <property type="entry name" value="RuBisCO, large subunit, small (N-terminal) domain"/>
    <property type="match status" value="1"/>
</dbReference>
<dbReference type="PROSITE" id="PS00157">
    <property type="entry name" value="RUBISCO_LARGE"/>
    <property type="match status" value="1"/>
</dbReference>
<protein>
    <recommendedName>
        <fullName>Ribulose bisphosphate carboxylase large chain</fullName>
        <shortName>RuBisCO large subunit</shortName>
        <ecNumber>4.1.1.39</ecNumber>
    </recommendedName>
</protein>
<comment type="function">
    <text>RuBisCO catalyzes two reactions: the carboxylation of D-ribulose 1,5-bisphosphate, the primary event in carbon dioxide fixation, as well as the oxidative fragmentation of the pentose substrate in the photorespiration process. Both reactions occur simultaneously and in competition at the same active site.</text>
</comment>
<comment type="catalytic activity">
    <reaction>
        <text>2 (2R)-3-phosphoglycerate + 2 H(+) = D-ribulose 1,5-bisphosphate + CO2 + H2O</text>
        <dbReference type="Rhea" id="RHEA:23124"/>
        <dbReference type="ChEBI" id="CHEBI:15377"/>
        <dbReference type="ChEBI" id="CHEBI:15378"/>
        <dbReference type="ChEBI" id="CHEBI:16526"/>
        <dbReference type="ChEBI" id="CHEBI:57870"/>
        <dbReference type="ChEBI" id="CHEBI:58272"/>
        <dbReference type="EC" id="4.1.1.39"/>
    </reaction>
</comment>
<comment type="catalytic activity">
    <reaction>
        <text>D-ribulose 1,5-bisphosphate + O2 = 2-phosphoglycolate + (2R)-3-phosphoglycerate + 2 H(+)</text>
        <dbReference type="Rhea" id="RHEA:36631"/>
        <dbReference type="ChEBI" id="CHEBI:15378"/>
        <dbReference type="ChEBI" id="CHEBI:15379"/>
        <dbReference type="ChEBI" id="CHEBI:57870"/>
        <dbReference type="ChEBI" id="CHEBI:58033"/>
        <dbReference type="ChEBI" id="CHEBI:58272"/>
    </reaction>
</comment>
<comment type="cofactor">
    <cofactor evidence="1">
        <name>Mg(2+)</name>
        <dbReference type="ChEBI" id="CHEBI:18420"/>
    </cofactor>
    <text evidence="1">Binds 1 Mg(2+) ion per subunit.</text>
</comment>
<comment type="subunit">
    <text evidence="1">Heterohexadecamer of 8 large chains and 8 small chains; disulfide-linked. The disulfide link is formed within the large subunit homodimers (By similarity).</text>
</comment>
<comment type="subcellular location">
    <subcellularLocation>
        <location>Plastid</location>
        <location>Chloroplast</location>
    </subcellularLocation>
</comment>
<comment type="PTM">
    <text evidence="1">The disulfide bond which can form in the large chain dimeric partners within the hexadecamer appears to be associated with oxidative stress and protein turnover.</text>
</comment>
<comment type="miscellaneous">
    <text evidence="1">The basic functional RuBisCO is composed of a large chain homodimer in a 'head-to-tail' conformation. In form I RuBisCO this homodimer is arranged in a barrel-like tetramer with the small subunits forming a tetrameric 'cap' on each end of the 'barrel' (By similarity).</text>
</comment>
<comment type="similarity">
    <text evidence="3">Belongs to the RuBisCO large chain family. Type I subfamily.</text>
</comment>
<evidence type="ECO:0000250" key="1"/>
<evidence type="ECO:0000269" key="2">
    <source>
    </source>
</evidence>
<evidence type="ECO:0000305" key="3"/>
<name>RBL_SOLLC</name>
<keyword id="KW-0007">Acetylation</keyword>
<keyword id="KW-0113">Calvin cycle</keyword>
<keyword id="KW-0120">Carbon dioxide fixation</keyword>
<keyword id="KW-0150">Chloroplast</keyword>
<keyword id="KW-0903">Direct protein sequencing</keyword>
<keyword id="KW-1015">Disulfide bond</keyword>
<keyword id="KW-0456">Lyase</keyword>
<keyword id="KW-0460">Magnesium</keyword>
<keyword id="KW-0479">Metal-binding</keyword>
<keyword id="KW-0488">Methylation</keyword>
<keyword id="KW-0503">Monooxygenase</keyword>
<keyword id="KW-0560">Oxidoreductase</keyword>
<keyword id="KW-0601">Photorespiration</keyword>
<keyword id="KW-0602">Photosynthesis</keyword>
<keyword id="KW-0934">Plastid</keyword>
<keyword id="KW-1185">Reference proteome</keyword>
<gene>
    <name type="primary">rbcL</name>
</gene>
<sequence length="477" mass="52954">MSPQTETKASVGFKAGVKEYKLTYYTPEYQTKDTDILAAFRVTPQPGVPPEEAGAAVAAESSTGTWTTVWTDGLTSLDRYKGRCYRIERVVGEKDQYIAYVAYPLDLFEEGSVTNMFTSIVGNVFGFKALRALRLEDLRIPPAYVKTFQGPPHGIQVERDKLNKYGRPLLGCTIKPKLGLSAKNYGRAVYECLRGGLDFTKDDENVNSQPFMRWRDRFLFCAEALFKAQTETGEIKGHYLNATAGTCEEMIKRAVFARELGVPIVMHDYLTGGFTANTTLAHYCRDNGLLLHIHRAMHAVIDRQKNHGIHFRVLAKALRMSGGDHIHSGTVVGKLEGERDITLGFVDLLRDDFVEQDRSRGIYFTQDWVSLPGVLPVASGGIHVWHMPALTEIFGDDSVLQFGGGTLGHPWGNAPGAVANRVALEACVKARNEGRDLAREGNEIIREACKWSPELAAACEVWKEIVFNFAAVDVLDK</sequence>
<geneLocation type="chloroplast"/>